<organism>
    <name type="scientific">Coxiella burnetii (strain RSA 493 / Nine Mile phase I)</name>
    <dbReference type="NCBI Taxonomy" id="227377"/>
    <lineage>
        <taxon>Bacteria</taxon>
        <taxon>Pseudomonadati</taxon>
        <taxon>Pseudomonadota</taxon>
        <taxon>Gammaproteobacteria</taxon>
        <taxon>Legionellales</taxon>
        <taxon>Coxiellaceae</taxon>
        <taxon>Coxiella</taxon>
    </lineage>
</organism>
<reference key="1">
    <citation type="journal article" date="2003" name="Proc. Natl. Acad. Sci. U.S.A.">
        <title>Complete genome sequence of the Q-fever pathogen, Coxiella burnetii.</title>
        <authorList>
            <person name="Seshadri R."/>
            <person name="Paulsen I.T."/>
            <person name="Eisen J.A."/>
            <person name="Read T.D."/>
            <person name="Nelson K.E."/>
            <person name="Nelson W.C."/>
            <person name="Ward N.L."/>
            <person name="Tettelin H."/>
            <person name="Davidsen T.M."/>
            <person name="Beanan M.J."/>
            <person name="DeBoy R.T."/>
            <person name="Daugherty S.C."/>
            <person name="Brinkac L.M."/>
            <person name="Madupu R."/>
            <person name="Dodson R.J."/>
            <person name="Khouri H.M."/>
            <person name="Lee K.H."/>
            <person name="Carty H.A."/>
            <person name="Scanlan D."/>
            <person name="Heinzen R.A."/>
            <person name="Thompson H.A."/>
            <person name="Samuel J.E."/>
            <person name="Fraser C.M."/>
            <person name="Heidelberg J.F."/>
        </authorList>
    </citation>
    <scope>NUCLEOTIDE SEQUENCE [LARGE SCALE GENOMIC DNA]</scope>
    <source>
        <strain>RSA 493 / Nine Mile phase I</strain>
    </source>
</reference>
<proteinExistence type="inferred from homology"/>
<dbReference type="EC" id="2.3.1.181" evidence="1"/>
<dbReference type="EMBL" id="AE016828">
    <property type="protein sequence ID" value="AAO90773.1"/>
    <property type="molecule type" value="Genomic_DNA"/>
</dbReference>
<dbReference type="RefSeq" id="NP_820259.1">
    <property type="nucleotide sequence ID" value="NC_002971.4"/>
</dbReference>
<dbReference type="RefSeq" id="WP_010958111.1">
    <property type="nucleotide sequence ID" value="NC_002971.4"/>
</dbReference>
<dbReference type="SMR" id="Q83C64"/>
<dbReference type="STRING" id="227377.CBU_1265"/>
<dbReference type="EnsemblBacteria" id="AAO90773">
    <property type="protein sequence ID" value="AAO90773"/>
    <property type="gene ID" value="CBU_1265"/>
</dbReference>
<dbReference type="GeneID" id="1209170"/>
<dbReference type="KEGG" id="cbu:CBU_1265"/>
<dbReference type="PATRIC" id="fig|227377.7.peg.1255"/>
<dbReference type="eggNOG" id="COG0321">
    <property type="taxonomic scope" value="Bacteria"/>
</dbReference>
<dbReference type="HOGENOM" id="CLU_035168_3_1_6"/>
<dbReference type="OrthoDB" id="9787061at2"/>
<dbReference type="UniPathway" id="UPA00538">
    <property type="reaction ID" value="UER00592"/>
</dbReference>
<dbReference type="Proteomes" id="UP000002671">
    <property type="component" value="Chromosome"/>
</dbReference>
<dbReference type="GO" id="GO:0005737">
    <property type="term" value="C:cytoplasm"/>
    <property type="evidence" value="ECO:0007669"/>
    <property type="project" value="UniProtKB-SubCell"/>
</dbReference>
<dbReference type="GO" id="GO:0033819">
    <property type="term" value="F:lipoyl(octanoyl) transferase activity"/>
    <property type="evidence" value="ECO:0000318"/>
    <property type="project" value="GO_Central"/>
</dbReference>
<dbReference type="GO" id="GO:0036211">
    <property type="term" value="P:protein modification process"/>
    <property type="evidence" value="ECO:0007669"/>
    <property type="project" value="InterPro"/>
</dbReference>
<dbReference type="CDD" id="cd16444">
    <property type="entry name" value="LipB"/>
    <property type="match status" value="1"/>
</dbReference>
<dbReference type="FunFam" id="3.30.930.10:FF:000020">
    <property type="entry name" value="Octanoyltransferase"/>
    <property type="match status" value="1"/>
</dbReference>
<dbReference type="Gene3D" id="3.30.930.10">
    <property type="entry name" value="Bira Bifunctional Protein, Domain 2"/>
    <property type="match status" value="1"/>
</dbReference>
<dbReference type="HAMAP" id="MF_00013">
    <property type="entry name" value="LipB"/>
    <property type="match status" value="1"/>
</dbReference>
<dbReference type="InterPro" id="IPR045864">
    <property type="entry name" value="aa-tRNA-synth_II/BPL/LPL"/>
</dbReference>
<dbReference type="InterPro" id="IPR004143">
    <property type="entry name" value="BPL_LPL_catalytic"/>
</dbReference>
<dbReference type="InterPro" id="IPR000544">
    <property type="entry name" value="Octanoyltransferase"/>
</dbReference>
<dbReference type="InterPro" id="IPR020605">
    <property type="entry name" value="Octanoyltransferase_CS"/>
</dbReference>
<dbReference type="NCBIfam" id="TIGR00214">
    <property type="entry name" value="lipB"/>
    <property type="match status" value="1"/>
</dbReference>
<dbReference type="NCBIfam" id="NF010922">
    <property type="entry name" value="PRK14342.1"/>
    <property type="match status" value="1"/>
</dbReference>
<dbReference type="PANTHER" id="PTHR10993:SF7">
    <property type="entry name" value="LIPOYLTRANSFERASE 2, MITOCHONDRIAL-RELATED"/>
    <property type="match status" value="1"/>
</dbReference>
<dbReference type="PANTHER" id="PTHR10993">
    <property type="entry name" value="OCTANOYLTRANSFERASE"/>
    <property type="match status" value="1"/>
</dbReference>
<dbReference type="Pfam" id="PF21948">
    <property type="entry name" value="LplA-B_cat"/>
    <property type="match status" value="1"/>
</dbReference>
<dbReference type="PIRSF" id="PIRSF016262">
    <property type="entry name" value="LPLase"/>
    <property type="match status" value="1"/>
</dbReference>
<dbReference type="SUPFAM" id="SSF55681">
    <property type="entry name" value="Class II aaRS and biotin synthetases"/>
    <property type="match status" value="1"/>
</dbReference>
<dbReference type="PROSITE" id="PS51733">
    <property type="entry name" value="BPL_LPL_CATALYTIC"/>
    <property type="match status" value="1"/>
</dbReference>
<dbReference type="PROSITE" id="PS01313">
    <property type="entry name" value="LIPB"/>
    <property type="match status" value="1"/>
</dbReference>
<gene>
    <name evidence="1" type="primary">lipB</name>
    <name type="ordered locus">CBU_1265</name>
</gene>
<accession>Q83C64</accession>
<keyword id="KW-0012">Acyltransferase</keyword>
<keyword id="KW-0963">Cytoplasm</keyword>
<keyword id="KW-1185">Reference proteome</keyword>
<keyword id="KW-0808">Transferase</keyword>
<comment type="function">
    <text evidence="1">Catalyzes the transfer of endogenously produced octanoic acid from octanoyl-acyl-carrier-protein onto the lipoyl domains of lipoate-dependent enzymes. Lipoyl-ACP can also act as a substrate although octanoyl-ACP is likely to be the physiological substrate.</text>
</comment>
<comment type="catalytic activity">
    <reaction evidence="1">
        <text>octanoyl-[ACP] + L-lysyl-[protein] = N(6)-octanoyl-L-lysyl-[protein] + holo-[ACP] + H(+)</text>
        <dbReference type="Rhea" id="RHEA:17665"/>
        <dbReference type="Rhea" id="RHEA-COMP:9636"/>
        <dbReference type="Rhea" id="RHEA-COMP:9685"/>
        <dbReference type="Rhea" id="RHEA-COMP:9752"/>
        <dbReference type="Rhea" id="RHEA-COMP:9928"/>
        <dbReference type="ChEBI" id="CHEBI:15378"/>
        <dbReference type="ChEBI" id="CHEBI:29969"/>
        <dbReference type="ChEBI" id="CHEBI:64479"/>
        <dbReference type="ChEBI" id="CHEBI:78463"/>
        <dbReference type="ChEBI" id="CHEBI:78809"/>
        <dbReference type="EC" id="2.3.1.181"/>
    </reaction>
</comment>
<comment type="pathway">
    <text evidence="1">Protein modification; protein lipoylation via endogenous pathway; protein N(6)-(lipoyl)lysine from octanoyl-[acyl-carrier-protein]: step 1/2.</text>
</comment>
<comment type="subcellular location">
    <subcellularLocation>
        <location evidence="1">Cytoplasm</location>
    </subcellularLocation>
</comment>
<comment type="miscellaneous">
    <text evidence="1">In the reaction, the free carboxyl group of octanoic acid is attached via an amide linkage to the epsilon-amino group of a specific lysine residue of lipoyl domains of lipoate-dependent enzymes.</text>
</comment>
<comment type="similarity">
    <text evidence="1">Belongs to the LipB family.</text>
</comment>
<name>LIPB_COXBU</name>
<sequence length="242" mass="27429">MNDVIIRQLAHLIPYQPLWEAMQTFTARRQSQTTDEIWFLEHEPVFTQGLAGKPEHVLNSGNIPLIRTDRGGQVTYHGPGQLMMYLLLDLNRLGLSTRTFVRTIENTVAESLQEWGIPAQGKETAPGVYVDDKKICSIGLRVRKGFSYHGLALNVAMDLTPFSCINPCGFKGLTMTQIQDYVNPIEMDAVKRTIIPLFLKNFGYNQPAIMVETSLEFLIDDHLRSFSEKLGERETVTNSRQN</sequence>
<protein>
    <recommendedName>
        <fullName evidence="1">Octanoyltransferase</fullName>
        <ecNumber evidence="1">2.3.1.181</ecNumber>
    </recommendedName>
    <alternativeName>
        <fullName evidence="1">Lipoate-protein ligase B</fullName>
    </alternativeName>
    <alternativeName>
        <fullName evidence="1">Lipoyl/octanoyl transferase</fullName>
    </alternativeName>
    <alternativeName>
        <fullName evidence="1">Octanoyl-[acyl-carrier-protein]-protein N-octanoyltransferase</fullName>
    </alternativeName>
</protein>
<evidence type="ECO:0000255" key="1">
    <source>
        <dbReference type="HAMAP-Rule" id="MF_00013"/>
    </source>
</evidence>
<evidence type="ECO:0000255" key="2">
    <source>
        <dbReference type="PROSITE-ProRule" id="PRU01067"/>
    </source>
</evidence>
<feature type="chain" id="PRO_0000062830" description="Octanoyltransferase">
    <location>
        <begin position="1"/>
        <end position="242"/>
    </location>
</feature>
<feature type="domain" description="BPL/LPL catalytic" evidence="2">
    <location>
        <begin position="31"/>
        <end position="206"/>
    </location>
</feature>
<feature type="active site" description="Acyl-thioester intermediate" evidence="1">
    <location>
        <position position="168"/>
    </location>
</feature>
<feature type="binding site" evidence="1">
    <location>
        <begin position="70"/>
        <end position="77"/>
    </location>
    <ligand>
        <name>substrate</name>
    </ligand>
</feature>
<feature type="binding site" evidence="1">
    <location>
        <begin position="137"/>
        <end position="139"/>
    </location>
    <ligand>
        <name>substrate</name>
    </ligand>
</feature>
<feature type="binding site" evidence="1">
    <location>
        <begin position="150"/>
        <end position="152"/>
    </location>
    <ligand>
        <name>substrate</name>
    </ligand>
</feature>
<feature type="site" description="Lowers pKa of active site Cys" evidence="1">
    <location>
        <position position="134"/>
    </location>
</feature>